<feature type="chain" id="PRO_0000347356" description="Urease accessory protein UreG 2">
    <location>
        <begin position="1"/>
        <end position="212"/>
    </location>
</feature>
<feature type="binding site" evidence="1">
    <location>
        <begin position="11"/>
        <end position="18"/>
    </location>
    <ligand>
        <name>GTP</name>
        <dbReference type="ChEBI" id="CHEBI:37565"/>
    </ligand>
</feature>
<keyword id="KW-0143">Chaperone</keyword>
<keyword id="KW-0963">Cytoplasm</keyword>
<keyword id="KW-0342">GTP-binding</keyword>
<keyword id="KW-0996">Nickel insertion</keyword>
<keyword id="KW-0547">Nucleotide-binding</keyword>
<keyword id="KW-1185">Reference proteome</keyword>
<gene>
    <name evidence="1" type="primary">ureG2</name>
    <name type="ordered locus">BAB1_1381</name>
</gene>
<accession>Q2YQD6</accession>
<dbReference type="EMBL" id="AM040264">
    <property type="protein sequence ID" value="CAJ11337.1"/>
    <property type="molecule type" value="Genomic_DNA"/>
</dbReference>
<dbReference type="SMR" id="Q2YQD6"/>
<dbReference type="STRING" id="359391.BAB1_1381"/>
<dbReference type="KEGG" id="bmf:BAB1_1381"/>
<dbReference type="PATRIC" id="fig|359391.11.peg.831"/>
<dbReference type="HOGENOM" id="CLU_072144_1_0_5"/>
<dbReference type="PhylomeDB" id="Q2YQD6"/>
<dbReference type="Proteomes" id="UP000002719">
    <property type="component" value="Chromosome I"/>
</dbReference>
<dbReference type="GO" id="GO:0005737">
    <property type="term" value="C:cytoplasm"/>
    <property type="evidence" value="ECO:0007669"/>
    <property type="project" value="UniProtKB-SubCell"/>
</dbReference>
<dbReference type="GO" id="GO:0005525">
    <property type="term" value="F:GTP binding"/>
    <property type="evidence" value="ECO:0007669"/>
    <property type="project" value="UniProtKB-KW"/>
</dbReference>
<dbReference type="GO" id="GO:0003924">
    <property type="term" value="F:GTPase activity"/>
    <property type="evidence" value="ECO:0007669"/>
    <property type="project" value="InterPro"/>
</dbReference>
<dbReference type="GO" id="GO:0016151">
    <property type="term" value="F:nickel cation binding"/>
    <property type="evidence" value="ECO:0007669"/>
    <property type="project" value="UniProtKB-UniRule"/>
</dbReference>
<dbReference type="GO" id="GO:0043419">
    <property type="term" value="P:urea catabolic process"/>
    <property type="evidence" value="ECO:0007669"/>
    <property type="project" value="InterPro"/>
</dbReference>
<dbReference type="CDD" id="cd05540">
    <property type="entry name" value="UreG"/>
    <property type="match status" value="1"/>
</dbReference>
<dbReference type="Gene3D" id="3.40.50.300">
    <property type="entry name" value="P-loop containing nucleotide triphosphate hydrolases"/>
    <property type="match status" value="1"/>
</dbReference>
<dbReference type="HAMAP" id="MF_01389">
    <property type="entry name" value="UreG"/>
    <property type="match status" value="1"/>
</dbReference>
<dbReference type="InterPro" id="IPR003495">
    <property type="entry name" value="CobW/HypB/UreG_nucleotide-bd"/>
</dbReference>
<dbReference type="InterPro" id="IPR027417">
    <property type="entry name" value="P-loop_NTPase"/>
</dbReference>
<dbReference type="InterPro" id="IPR004400">
    <property type="entry name" value="UreG"/>
</dbReference>
<dbReference type="NCBIfam" id="TIGR00101">
    <property type="entry name" value="ureG"/>
    <property type="match status" value="1"/>
</dbReference>
<dbReference type="PANTHER" id="PTHR31715">
    <property type="entry name" value="UREASE ACCESSORY PROTEIN G"/>
    <property type="match status" value="1"/>
</dbReference>
<dbReference type="PANTHER" id="PTHR31715:SF0">
    <property type="entry name" value="UREASE ACCESSORY PROTEIN G"/>
    <property type="match status" value="1"/>
</dbReference>
<dbReference type="Pfam" id="PF02492">
    <property type="entry name" value="cobW"/>
    <property type="match status" value="1"/>
</dbReference>
<dbReference type="PIRSF" id="PIRSF005624">
    <property type="entry name" value="Ni-bind_GTPase"/>
    <property type="match status" value="1"/>
</dbReference>
<dbReference type="SUPFAM" id="SSF52540">
    <property type="entry name" value="P-loop containing nucleoside triphosphate hydrolases"/>
    <property type="match status" value="1"/>
</dbReference>
<organism>
    <name type="scientific">Brucella abortus (strain 2308)</name>
    <dbReference type="NCBI Taxonomy" id="359391"/>
    <lineage>
        <taxon>Bacteria</taxon>
        <taxon>Pseudomonadati</taxon>
        <taxon>Pseudomonadota</taxon>
        <taxon>Alphaproteobacteria</taxon>
        <taxon>Hyphomicrobiales</taxon>
        <taxon>Brucellaceae</taxon>
        <taxon>Brucella/Ochrobactrum group</taxon>
        <taxon>Brucella</taxon>
    </lineage>
</organism>
<proteinExistence type="inferred from homology"/>
<name>UREG2_BRUA2</name>
<reference key="1">
    <citation type="journal article" date="2005" name="Infect. Immun.">
        <title>Whole-genome analyses of speciation events in pathogenic Brucellae.</title>
        <authorList>
            <person name="Chain P.S."/>
            <person name="Comerci D.J."/>
            <person name="Tolmasky M.E."/>
            <person name="Larimer F.W."/>
            <person name="Malfatti S.A."/>
            <person name="Vergez L.M."/>
            <person name="Aguero F."/>
            <person name="Land M.L."/>
            <person name="Ugalde R.A."/>
            <person name="Garcia E."/>
        </authorList>
    </citation>
    <scope>NUCLEOTIDE SEQUENCE [LARGE SCALE GENOMIC DNA]</scope>
    <source>
        <strain>2308</strain>
    </source>
</reference>
<reference key="2">
    <citation type="journal article" date="2007" name="Infect. Immun.">
        <title>Characterization of the urease operon of Brucella abortus and assessment of its role in virulence of the bacterium.</title>
        <authorList>
            <person name="Sangari F.J."/>
            <person name="Seoane A."/>
            <person name="Rodriguez M.C."/>
            <person name="Aguero J."/>
            <person name="Garcia Lobo J.M."/>
        </authorList>
    </citation>
    <scope>LACK OF ROLE IN VIRULENCE</scope>
</reference>
<sequence length="212" mass="22977">MKKIPRIGVGGPVGSGKTAIIEAVVPILIKLGYRILVITNDIVTTEDAKHVQRTLKGVLIEDRIVGVETGGCPHTAVREDPSMNLAAVEEMEAKFPDTDLVLLESGGDNLTLTFSPALIDFFIYVIDVAAGDKIPRKNGPGISQSDILVINKTDLAPYVGASLQVMDDDSRMMRGKKPFVFTNCKTNEGIDDLVHLIRENVLFDTEVSKESA</sequence>
<evidence type="ECO:0000255" key="1">
    <source>
        <dbReference type="HAMAP-Rule" id="MF_01389"/>
    </source>
</evidence>
<protein>
    <recommendedName>
        <fullName evidence="1">Urease accessory protein UreG 2</fullName>
    </recommendedName>
</protein>
<comment type="function">
    <text evidence="1">Facilitates the functional incorporation of the urease nickel metallocenter. This process requires GTP hydrolysis, probably effectuated by UreG.</text>
</comment>
<comment type="subunit">
    <text evidence="1">Homodimer. UreD, UreF and UreG form a complex that acts as a GTP-hydrolysis-dependent molecular chaperone, activating the urease apoprotein by helping to assemble the nickel containing metallocenter of UreC. The UreE protein probably delivers the nickel.</text>
</comment>
<comment type="subcellular location">
    <subcellularLocation>
        <location evidence="1">Cytoplasm</location>
    </subcellularLocation>
</comment>
<comment type="similarity">
    <text evidence="1">Belongs to the SIMIBI class G3E GTPase family. UreG subfamily.</text>
</comment>